<protein>
    <recommendedName>
        <fullName>Nuclear hormone receptor family member nhr-130</fullName>
    </recommendedName>
</protein>
<gene>
    <name type="primary">nhr-130</name>
    <name type="ORF">T01G6.8</name>
</gene>
<evidence type="ECO:0000255" key="1">
    <source>
        <dbReference type="PROSITE-ProRule" id="PRU00407"/>
    </source>
</evidence>
<evidence type="ECO:0000255" key="2">
    <source>
        <dbReference type="PROSITE-ProRule" id="PRU01189"/>
    </source>
</evidence>
<evidence type="ECO:0000305" key="3"/>
<accession>O16963</accession>
<comment type="function">
    <text>Orphan nuclear receptor.</text>
</comment>
<comment type="subcellular location">
    <subcellularLocation>
        <location evidence="1">Nucleus</location>
    </subcellularLocation>
</comment>
<comment type="similarity">
    <text evidence="3">Belongs to the nuclear hormone receptor family.</text>
</comment>
<proteinExistence type="inferred from homology"/>
<dbReference type="EMBL" id="FO081653">
    <property type="protein sequence ID" value="CCD73123.1"/>
    <property type="molecule type" value="Genomic_DNA"/>
</dbReference>
<dbReference type="PIR" id="T32190">
    <property type="entry name" value="T32190"/>
</dbReference>
<dbReference type="RefSeq" id="NP_503216.1">
    <property type="nucleotide sequence ID" value="NM_070815.7"/>
</dbReference>
<dbReference type="FunCoup" id="O16963">
    <property type="interactions" value="487"/>
</dbReference>
<dbReference type="PaxDb" id="6239-T01G6.8"/>
<dbReference type="PeptideAtlas" id="O16963"/>
<dbReference type="EnsemblMetazoa" id="T01G6.8.1">
    <property type="protein sequence ID" value="T01G6.8.1"/>
    <property type="gene ID" value="WBGene00003720"/>
</dbReference>
<dbReference type="GeneID" id="187965"/>
<dbReference type="KEGG" id="cel:CELE_T01G6.8"/>
<dbReference type="UCSC" id="T01G6.8">
    <property type="organism name" value="c. elegans"/>
</dbReference>
<dbReference type="AGR" id="WB:WBGene00003720"/>
<dbReference type="CTD" id="187965"/>
<dbReference type="WormBase" id="T01G6.8">
    <property type="protein sequence ID" value="CE18167"/>
    <property type="gene ID" value="WBGene00003720"/>
    <property type="gene designation" value="nhr-130"/>
</dbReference>
<dbReference type="eggNOG" id="KOG3575">
    <property type="taxonomic scope" value="Eukaryota"/>
</dbReference>
<dbReference type="GeneTree" id="ENSGT00940000164378"/>
<dbReference type="HOGENOM" id="CLU_007368_7_1_1"/>
<dbReference type="InParanoid" id="O16963"/>
<dbReference type="OMA" id="GRLNQMM"/>
<dbReference type="OrthoDB" id="5836960at2759"/>
<dbReference type="PhylomeDB" id="O16963"/>
<dbReference type="PRO" id="PR:O16963"/>
<dbReference type="Proteomes" id="UP000001940">
    <property type="component" value="Chromosome V"/>
</dbReference>
<dbReference type="Bgee" id="WBGene00003720">
    <property type="expression patterns" value="Expressed in pharyngeal muscle cell (C elegans) and 3 other cell types or tissues"/>
</dbReference>
<dbReference type="GO" id="GO:0005634">
    <property type="term" value="C:nucleus"/>
    <property type="evidence" value="ECO:0007669"/>
    <property type="project" value="UniProtKB-SubCell"/>
</dbReference>
<dbReference type="GO" id="GO:0003700">
    <property type="term" value="F:DNA-binding transcription factor activity"/>
    <property type="evidence" value="ECO:0007669"/>
    <property type="project" value="InterPro"/>
</dbReference>
<dbReference type="GO" id="GO:0000978">
    <property type="term" value="F:RNA polymerase II cis-regulatory region sequence-specific DNA binding"/>
    <property type="evidence" value="ECO:0007669"/>
    <property type="project" value="InterPro"/>
</dbReference>
<dbReference type="GO" id="GO:0008270">
    <property type="term" value="F:zinc ion binding"/>
    <property type="evidence" value="ECO:0007669"/>
    <property type="project" value="UniProtKB-KW"/>
</dbReference>
<dbReference type="CDD" id="cd06960">
    <property type="entry name" value="NR_DBD_HNF4A"/>
    <property type="match status" value="1"/>
</dbReference>
<dbReference type="Gene3D" id="3.30.50.10">
    <property type="entry name" value="Erythroid Transcription Factor GATA-1, subunit A"/>
    <property type="match status" value="1"/>
</dbReference>
<dbReference type="Gene3D" id="1.10.565.10">
    <property type="entry name" value="Retinoid X Receptor"/>
    <property type="match status" value="1"/>
</dbReference>
<dbReference type="InterPro" id="IPR051152">
    <property type="entry name" value="C.elegans_Orphan_NR"/>
</dbReference>
<dbReference type="InterPro" id="IPR049636">
    <property type="entry name" value="HNF4-like_DBD"/>
</dbReference>
<dbReference type="InterPro" id="IPR035500">
    <property type="entry name" value="NHR-like_dom_sf"/>
</dbReference>
<dbReference type="InterPro" id="IPR000536">
    <property type="entry name" value="Nucl_hrmn_rcpt_lig-bd"/>
</dbReference>
<dbReference type="InterPro" id="IPR001628">
    <property type="entry name" value="Znf_hrmn_rcpt"/>
</dbReference>
<dbReference type="InterPro" id="IPR013088">
    <property type="entry name" value="Znf_NHR/GATA"/>
</dbReference>
<dbReference type="PANTHER" id="PTHR45680">
    <property type="entry name" value="NUCLEAR HORMONE RECEPTOR FAMILY"/>
    <property type="match status" value="1"/>
</dbReference>
<dbReference type="PANTHER" id="PTHR45680:SF18">
    <property type="entry name" value="NUCLEAR HORMONE RECEPTOR FAMILY-RELATED"/>
    <property type="match status" value="1"/>
</dbReference>
<dbReference type="Pfam" id="PF00104">
    <property type="entry name" value="Hormone_recep"/>
    <property type="match status" value="1"/>
</dbReference>
<dbReference type="Pfam" id="PF00105">
    <property type="entry name" value="zf-C4"/>
    <property type="match status" value="1"/>
</dbReference>
<dbReference type="PRINTS" id="PR00047">
    <property type="entry name" value="STROIDFINGER"/>
</dbReference>
<dbReference type="SMART" id="SM00430">
    <property type="entry name" value="HOLI"/>
    <property type="match status" value="1"/>
</dbReference>
<dbReference type="SMART" id="SM00399">
    <property type="entry name" value="ZnF_C4"/>
    <property type="match status" value="1"/>
</dbReference>
<dbReference type="SUPFAM" id="SSF57716">
    <property type="entry name" value="Glucocorticoid receptor-like (DNA-binding domain)"/>
    <property type="match status" value="1"/>
</dbReference>
<dbReference type="SUPFAM" id="SSF48508">
    <property type="entry name" value="Nuclear receptor ligand-binding domain"/>
    <property type="match status" value="1"/>
</dbReference>
<dbReference type="PROSITE" id="PS51843">
    <property type="entry name" value="NR_LBD"/>
    <property type="match status" value="1"/>
</dbReference>
<dbReference type="PROSITE" id="PS51030">
    <property type="entry name" value="NUCLEAR_REC_DBD_2"/>
    <property type="match status" value="1"/>
</dbReference>
<organism>
    <name type="scientific">Caenorhabditis elegans</name>
    <dbReference type="NCBI Taxonomy" id="6239"/>
    <lineage>
        <taxon>Eukaryota</taxon>
        <taxon>Metazoa</taxon>
        <taxon>Ecdysozoa</taxon>
        <taxon>Nematoda</taxon>
        <taxon>Chromadorea</taxon>
        <taxon>Rhabditida</taxon>
        <taxon>Rhabditina</taxon>
        <taxon>Rhabditomorpha</taxon>
        <taxon>Rhabditoidea</taxon>
        <taxon>Rhabditidae</taxon>
        <taxon>Peloderinae</taxon>
        <taxon>Caenorhabditis</taxon>
    </lineage>
</organism>
<name>NH130_CAEEL</name>
<keyword id="KW-0238">DNA-binding</keyword>
<keyword id="KW-0479">Metal-binding</keyword>
<keyword id="KW-0539">Nucleus</keyword>
<keyword id="KW-0675">Receptor</keyword>
<keyword id="KW-1185">Reference proteome</keyword>
<keyword id="KW-0804">Transcription</keyword>
<keyword id="KW-0805">Transcription regulation</keyword>
<keyword id="KW-0862">Zinc</keyword>
<keyword id="KW-0863">Zinc-finger</keyword>
<feature type="chain" id="PRO_0000223593" description="Nuclear hormone receptor family member nhr-130">
    <location>
        <begin position="1"/>
        <end position="440"/>
    </location>
</feature>
<feature type="domain" description="NR LBD" evidence="2">
    <location>
        <begin position="184"/>
        <end position="439"/>
    </location>
</feature>
<feature type="DNA-binding region" description="Nuclear receptor" evidence="1">
    <location>
        <begin position="34"/>
        <end position="110"/>
    </location>
</feature>
<feature type="zinc finger region" description="NR C4-type" evidence="1">
    <location>
        <begin position="37"/>
        <end position="57"/>
    </location>
</feature>
<feature type="zinc finger region" description="NR C4-type" evidence="1">
    <location>
        <begin position="74"/>
        <end position="93"/>
    </location>
</feature>
<sequence length="440" mass="51384">MQIATSSTSPSIFYTPSISPMEEDMNCQELVVNLYTCQVCALPAHGNHFGAISCRACAAFFRRACTGTKTTYKCKKQNNCDIWENGRYKCKKCRLDRCNEVGMDPGRFQFDRDLISATEKYPNSKNFRRTFGMSRLPETIEHFLGRPHFIIFLERHIYSHSEKNFVDLQHLIAKASKLLELGSEKPLIARNNLEKLALGLNLVRDQPAGSHDVQLVTKLGKDEALTFWETDFLTVAKWLTYFDDFQLLPHNQQILLLKSVWHVWNRLEKLALTATSRRQNVCEQKQLMLTYNSVCNPKTIELDYSWFTKYPKEQLCFFFDEMEDYMLTSALDPLTSLEPTDIELTYMLCQLCFHYAGKRYGGEILEVTEKFQENLADNLHDYYVNELNMPRYCGRLNQMLKINNLIQQDIWEKRAKHELAKVFDIFCIEFSHPEMFEDTG</sequence>
<reference key="1">
    <citation type="journal article" date="1998" name="Science">
        <title>Genome sequence of the nematode C. elegans: a platform for investigating biology.</title>
        <authorList>
            <consortium name="The C. elegans sequencing consortium"/>
        </authorList>
    </citation>
    <scope>NUCLEOTIDE SEQUENCE [LARGE SCALE GENOMIC DNA]</scope>
    <source>
        <strain>Bristol N2</strain>
    </source>
</reference>